<feature type="signal peptide" evidence="1">
    <location>
        <begin position="1"/>
        <end position="22"/>
    </location>
</feature>
<feature type="propeptide" id="PRO_0000315427">
    <location>
        <begin position="23"/>
        <end position="48"/>
    </location>
</feature>
<feature type="peptide" id="PRO_0000315428" description="Mu-conotoxin Lt5d">
    <location>
        <begin position="51"/>
        <end position="62"/>
    </location>
</feature>
<feature type="sequence variant" description="In Lt5.4.1." evidence="2">
    <original>A</original>
    <variation>S</variation>
    <location>
        <position position="55"/>
    </location>
</feature>
<feature type="sequence variant" description="In Lt5.4.2." evidence="2">
    <original>K</original>
    <variation>N</variation>
    <location>
        <position position="56"/>
    </location>
</feature>
<comment type="function">
    <text evidence="3">Mu-conotoxins block voltage-gated sodium channels (Nav). This toxin inhibits tetrodotoxin(TTX)-sensitive sodium channels, but does not affect TTX-resistant sodium channels. Reduces the amplitude of currents without changing the activation and inactivation kinetics of currents.</text>
</comment>
<comment type="subcellular location">
    <subcellularLocation>
        <location evidence="3">Secreted</location>
    </subcellularLocation>
</comment>
<comment type="tissue specificity">
    <text evidence="7">Expressed by the venom duct.</text>
</comment>
<comment type="domain">
    <text evidence="6">The cysteine framework is V (CC-CC).</text>
</comment>
<comment type="PTM">
    <text evidence="6">Contains 2 disulfide bonds that can be either 'C1-C3, C2-C4' or 'C1-C4, C2-C3', since these disulfide connectivities have been observed for conotoxins with cysteine framework V (for examples, see AC P0DQQ7 and AC P81755).</text>
</comment>
<comment type="mass spectrometry"/>
<comment type="miscellaneous">
    <text evidence="8">Negative results: does not have the ability to interact with the G-protein coupled somatostatin type 3 receptor (SSTR3).</text>
</comment>
<comment type="similarity">
    <text evidence="6">Belongs to the conotoxin T superfamily.</text>
</comment>
<sequence>MRCLPVFIILLLLIPSAPSVDAQPTTKDDVPLASLHDNAKRALQMFWNKRDCCPAKLLCCNP</sequence>
<reference key="1">
    <citation type="journal article" date="2006" name="Genomics">
        <title>Diversity and evolution of conotoxins based on gene expression profiling of Conus litteratus.</title>
        <authorList>
            <person name="Pi C."/>
            <person name="Liu J."/>
            <person name="Peng C."/>
            <person name="Liu Y."/>
            <person name="Jiang X."/>
            <person name="Zhao Y."/>
            <person name="Tang S."/>
            <person name="Wang L."/>
            <person name="Dong M."/>
            <person name="Chen S."/>
            <person name="Xu A."/>
        </authorList>
    </citation>
    <scope>NUCLEOTIDE SEQUENCE [MRNA]</scope>
    <scope>VARIANTS SER-55 AND ASN-56</scope>
    <source>
        <tissue>Venom duct</tissue>
    </source>
</reference>
<reference key="2">
    <citation type="journal article" date="2013" name="Biochem. Pharmacol.">
        <title>Identification, structural and pharmacological characterization of tau-CnVA, a conopeptide that selectively interacts with somatostatin sst receptor.</title>
        <authorList>
            <person name="Petrel C."/>
            <person name="Hocking H.G."/>
            <person name="Reynaud M."/>
            <person name="Upert G."/>
            <person name="Favreau P."/>
            <person name="Biass D."/>
            <person name="Paolini-Bertrand M."/>
            <person name="Peigneur S."/>
            <person name="Tytgat J."/>
            <person name="Gilles N."/>
            <person name="Hartley O."/>
            <person name="Boelens R."/>
            <person name="Stocklin R."/>
            <person name="Servent D."/>
        </authorList>
    </citation>
    <scope>SYNTHESIS OF 51-62</scope>
</reference>
<reference key="3">
    <citation type="journal article" date="2007" name="Peptides">
        <title>Isolation and characterization of a T-superfamily conotoxin from Conus litteratus with targeting tetrodotoxin-sensitive sodium channels.</title>
        <authorList>
            <person name="Liu J."/>
            <person name="Wu Q."/>
            <person name="Pi C."/>
            <person name="Zhao Y."/>
            <person name="Zhou M."/>
            <person name="Wang L."/>
            <person name="Chen S."/>
            <person name="Xu A."/>
        </authorList>
    </citation>
    <scope>PROTEIN SEQUENCE OF 51-62</scope>
    <scope>FUNCTION</scope>
    <scope>SUBCELLULAR LOCATION</scope>
    <scope>MASS SPECTROMETRY</scope>
    <source>
        <tissue>Venom</tissue>
    </source>
</reference>
<proteinExistence type="evidence at protein level"/>
<name>CT54_CONLT</name>
<accession>Q1A3R1</accession>
<accession>Q1A3Q3</accession>
<accession>Q1A3Q4</accession>
<protein>
    <recommendedName>
        <fullName evidence="5">Mu-conotoxin Lt5d</fullName>
    </recommendedName>
    <alternativeName>
        <fullName evidence="4">Lt5.4</fullName>
    </alternativeName>
</protein>
<organism>
    <name type="scientific">Conus litteratus</name>
    <name type="common">Lettered cone</name>
    <dbReference type="NCBI Taxonomy" id="89445"/>
    <lineage>
        <taxon>Eukaryota</taxon>
        <taxon>Metazoa</taxon>
        <taxon>Spiralia</taxon>
        <taxon>Lophotrochozoa</taxon>
        <taxon>Mollusca</taxon>
        <taxon>Gastropoda</taxon>
        <taxon>Caenogastropoda</taxon>
        <taxon>Neogastropoda</taxon>
        <taxon>Conoidea</taxon>
        <taxon>Conidae</taxon>
        <taxon>Conus</taxon>
        <taxon>Elisaconus</taxon>
    </lineage>
</organism>
<keyword id="KW-0165">Cleavage on pair of basic residues</keyword>
<keyword id="KW-0903">Direct protein sequencing</keyword>
<keyword id="KW-1015">Disulfide bond</keyword>
<keyword id="KW-0872">Ion channel impairing toxin</keyword>
<keyword id="KW-0528">Neurotoxin</keyword>
<keyword id="KW-0964">Secreted</keyword>
<keyword id="KW-0732">Signal</keyword>
<keyword id="KW-0800">Toxin</keyword>
<keyword id="KW-0738">Voltage-gated sodium channel impairing toxin</keyword>
<evidence type="ECO:0000255" key="1"/>
<evidence type="ECO:0000269" key="2">
    <source>
    </source>
</evidence>
<evidence type="ECO:0000269" key="3">
    <source>
    </source>
</evidence>
<evidence type="ECO:0000303" key="4">
    <source>
    </source>
</evidence>
<evidence type="ECO:0000303" key="5">
    <source>
    </source>
</evidence>
<evidence type="ECO:0000305" key="6"/>
<evidence type="ECO:0000305" key="7">
    <source>
    </source>
</evidence>
<evidence type="ECO:0000305" key="8">
    <source>
    </source>
</evidence>
<dbReference type="EMBL" id="DQ345353">
    <property type="protein sequence ID" value="ABC70189.1"/>
    <property type="molecule type" value="mRNA"/>
</dbReference>
<dbReference type="EMBL" id="DQ345360">
    <property type="protein sequence ID" value="ABC70196.1"/>
    <property type="molecule type" value="mRNA"/>
</dbReference>
<dbReference type="EMBL" id="DQ345361">
    <property type="protein sequence ID" value="ABC70197.1"/>
    <property type="molecule type" value="mRNA"/>
</dbReference>
<dbReference type="ConoServer" id="1140">
    <property type="toxin name" value="Lt5d precursor"/>
</dbReference>
<dbReference type="GO" id="GO:0005576">
    <property type="term" value="C:extracellular region"/>
    <property type="evidence" value="ECO:0000314"/>
    <property type="project" value="UniProtKB"/>
</dbReference>
<dbReference type="GO" id="GO:0019871">
    <property type="term" value="F:sodium channel inhibitor activity"/>
    <property type="evidence" value="ECO:0000314"/>
    <property type="project" value="UniProtKB"/>
</dbReference>
<dbReference type="GO" id="GO:0090729">
    <property type="term" value="F:toxin activity"/>
    <property type="evidence" value="ECO:0000314"/>
    <property type="project" value="UniProtKB"/>
</dbReference>
<dbReference type="GO" id="GO:0044493">
    <property type="term" value="P:envenomation resulting in negative regulation of voltage-gated sodium channel activity in another organism"/>
    <property type="evidence" value="ECO:0000314"/>
    <property type="project" value="UniProtKB"/>
</dbReference>
<dbReference type="InterPro" id="IPR031565">
    <property type="entry name" value="T-conotoxin"/>
</dbReference>
<dbReference type="Pfam" id="PF16981">
    <property type="entry name" value="Chi-conotoxin"/>
    <property type="match status" value="1"/>
</dbReference>